<feature type="signal peptide" evidence="2">
    <location>
        <begin position="1"/>
        <end position="22"/>
    </location>
</feature>
<feature type="chain" id="PRO_0000222398" description="Protein P1-P2">
    <location>
        <begin position="23"/>
        <end position="1035"/>
    </location>
</feature>
<feature type="chain" id="PRO_0000390903" description="Serine protease" evidence="2">
    <location>
        <begin position="204"/>
        <end position="400"/>
    </location>
</feature>
<feature type="chain" id="PRO_0000390904" description="RNA-directed RNA polymerase" evidence="2">
    <location>
        <begin position="401"/>
        <end position="1035"/>
    </location>
</feature>
<feature type="transmembrane region" description="Helical" evidence="2">
    <location>
        <begin position="115"/>
        <end position="135"/>
    </location>
</feature>
<feature type="transmembrane region" description="Helical" evidence="2">
    <location>
        <begin position="137"/>
        <end position="157"/>
    </location>
</feature>
<feature type="transmembrane region" description="Helical" evidence="2">
    <location>
        <begin position="167"/>
        <end position="187"/>
    </location>
</feature>
<feature type="domain" description="Peptidase S39" evidence="4">
    <location>
        <begin position="206"/>
        <end position="400"/>
    </location>
</feature>
<feature type="domain" description="RdRp catalytic" evidence="3">
    <location>
        <begin position="829"/>
        <end position="944"/>
    </location>
</feature>
<feature type="region of interest" description="Disordered" evidence="5">
    <location>
        <begin position="455"/>
        <end position="534"/>
    </location>
</feature>
<feature type="compositionally biased region" description="Basic residues" evidence="5">
    <location>
        <begin position="463"/>
        <end position="477"/>
    </location>
</feature>
<feature type="compositionally biased region" description="Basic and acidic residues" evidence="5">
    <location>
        <begin position="478"/>
        <end position="488"/>
    </location>
</feature>
<feature type="compositionally biased region" description="Basic and acidic residues" evidence="5">
    <location>
        <begin position="499"/>
        <end position="519"/>
    </location>
</feature>
<feature type="active site" description="For protease activity" evidence="4">
    <location>
        <position position="254"/>
    </location>
</feature>
<feature type="active site" description="For protease activity" evidence="4">
    <location>
        <position position="289"/>
    </location>
</feature>
<feature type="active site" description="For protease activity" evidence="4">
    <location>
        <position position="357"/>
    </location>
</feature>
<feature type="site" description="Cleavage; by viral serine protease" evidence="2">
    <location>
        <begin position="203"/>
        <end position="204"/>
    </location>
</feature>
<feature type="site" description="Cleavage; by viral serine protease" evidence="1">
    <location>
        <begin position="400"/>
        <end position="401"/>
    </location>
</feature>
<sequence>MYSKLMFFFALCSISFLFTSEAASTMLLESSYLPLNQSYAPGFLYKRDMLPPPLQAVLTYTCPEPRPLAEESYNDLLRAISQKSSSDFQNAYSLALSFSSDFYQHGLKTLKDVSFLAVEKFLWGLTRLWSSLILASFSALWWLVSNFTTPVFCLALLYTVTKYMVKTVSFLFGGLPIWIISIAFSLLKKSFSALRSTPKCLYEKAIDGFKSFTIPQSPPKSCVIPITHASGNHAGYASCIKLYNGENALMTATHVLRDCPNAVAVSAKGLKTRIPLAEFKTIAKSDKGDVTLLRGPPNWEGLLGCKAANVITAANLAKCKASIYSFDRDGWVSSYAEIVGSEGTDVMVLSHTEGGHSGSPYFNGKTILGVHSGASATGNYNLMAPIPSLPGLTSPTYVFETTAPQGRVFAQEDIAEIEGLYAQVMKRVQQAEDFKPKTGKYWGDMEDDEDIFFESKEDLSGKRSARHRPRNKRRRQLHPKDKQRRWERDDGENNLISSGKDKSREHREESDRGDLRESDENSEIPPQKSPKETAGEFERYFSSLYNWEVPTSPREVPGFRHCGKLPQYYHPKQKEESSWGKTLVGNHPALGEKTSGFGWPKFGPEAELKSLRLQASRWLERAQSAEIPSDAERERVIQKTADVYHPCQTNGPAATRGGTLTWNNFMIDFKQAVFSLEFDAGIELPYIAYGKPTHRGWVEDQKLLPILAQLTFFRLQKMLEVNFEDMGPEELVRNGLCDPIRLFVKGEPHKQAKLDEGRYRLIMSVSLVDQLVARVLFQNQNKREIALWRAIPSKPGFGLSTDEQVLDFVESLARQVGTTTTEVVANWKNYLTPTDCSGFDWSVADWMLHDDMIVRNRLTIDLNPATERLRSCWLRCISNSVLCLSDGTLLAQIHPGVQKSGSYNTSSSNSRIRVMAAFHTGAIWAMAMGDDALESNPADLAAYKKLGFKVEVSGQLEFCSHIFRAPDLALPVNENKMIYKLIYGYNPGSGNAEVVSNYLAACFSVLNELRHDPASVELLYSWLVDPVLPQKIPGE</sequence>
<organism>
    <name type="scientific">Turnip yellows virus (isolate FL-1)</name>
    <name type="common">TuYV</name>
    <name type="synonym">BWYV-FL1</name>
    <dbReference type="NCBI Taxonomy" id="12043"/>
    <lineage>
        <taxon>Viruses</taxon>
        <taxon>Riboviria</taxon>
        <taxon>Orthornavirae</taxon>
        <taxon>Pisuviricota</taxon>
        <taxon>Pisoniviricetes</taxon>
        <taxon>Sobelivirales</taxon>
        <taxon>Solemoviridae</taxon>
        <taxon>Polerovirus</taxon>
        <taxon>Beet western yellows virus</taxon>
    </lineage>
</organism>
<organismHost>
    <name type="scientific">Beta vulgaris</name>
    <name type="common">Sugar beet</name>
    <dbReference type="NCBI Taxonomy" id="161934"/>
</organismHost>
<organismHost>
    <name type="scientific">Brassica napus subsp. rapifera</name>
    <dbReference type="NCBI Taxonomy" id="3709"/>
</organismHost>
<organismHost>
    <name type="scientific">Brassica napus var. napus</name>
    <dbReference type="NCBI Taxonomy" id="138011"/>
</organismHost>
<organismHost>
    <name type="scientific">Brassica nigra</name>
    <name type="common">Black mustard</name>
    <name type="synonym">Sinapis nigra</name>
    <dbReference type="NCBI Taxonomy" id="3710"/>
</organismHost>
<organismHost>
    <name type="scientific">Brassica oleracea var. botrytis</name>
    <name type="common">Cauliflower</name>
    <dbReference type="NCBI Taxonomy" id="3715"/>
</organismHost>
<organismHost>
    <name type="scientific">Brassica oleracea var. capitata</name>
    <name type="common">Cabbage</name>
    <dbReference type="NCBI Taxonomy" id="3716"/>
</organismHost>
<organismHost>
    <name type="scientific">Brassica rapa subsp. rapa</name>
    <name type="common">Turnip</name>
    <dbReference type="NCBI Taxonomy" id="51350"/>
</organismHost>
<organismHost>
    <name type="scientific">Capsicum annuum</name>
    <name type="common">Capsicum pepper</name>
    <dbReference type="NCBI Taxonomy" id="4072"/>
</organismHost>
<organismHost>
    <name type="scientific">Cicer arietinum</name>
    <name type="common">Chickpea</name>
    <name type="synonym">Garbanzo</name>
    <dbReference type="NCBI Taxonomy" id="3827"/>
</organismHost>
<organismHost>
    <name type="scientific">Citrullus lanatus</name>
    <name type="common">Watermelon</name>
    <name type="synonym">Citrullus vulgaris</name>
    <dbReference type="NCBI Taxonomy" id="3654"/>
</organismHost>
<organismHost>
    <name type="scientific">Crambe hispanica subsp. abyssinica</name>
    <name type="common">Abyssinian kale</name>
    <name type="synonym">Crambe abyssinica</name>
    <dbReference type="NCBI Taxonomy" id="3721"/>
</organismHost>
<organismHost>
    <name type="scientific">Cucumis sativus</name>
    <name type="common">Cucumber</name>
    <dbReference type="NCBI Taxonomy" id="3659"/>
</organismHost>
<organismHost>
    <name type="scientific">Cucurbita pepo</name>
    <name type="common">Vegetable marrow</name>
    <name type="synonym">Summer squash</name>
    <dbReference type="NCBI Taxonomy" id="3663"/>
</organismHost>
<organismHost>
    <name type="scientific">Glycine max</name>
    <name type="common">Soybean</name>
    <name type="synonym">Glycine hispida</name>
    <dbReference type="NCBI Taxonomy" id="3847"/>
</organismHost>
<organismHost>
    <name type="scientific">Helianthus annuus</name>
    <name type="common">Common sunflower</name>
    <dbReference type="NCBI Taxonomy" id="4232"/>
</organismHost>
<organismHost>
    <name type="scientific">Lactuca sativa</name>
    <name type="common">Garden lettuce</name>
    <dbReference type="NCBI Taxonomy" id="4236"/>
</organismHost>
<organismHost>
    <name type="scientific">Phlox drummondii</name>
    <name type="common">Annual phlox</name>
    <dbReference type="NCBI Taxonomy" id="103529"/>
</organismHost>
<organismHost>
    <name type="scientific">Pisum sativum</name>
    <name type="common">Garden pea</name>
    <name type="synonym">Lathyrus oleraceus</name>
    <dbReference type="NCBI Taxonomy" id="3888"/>
</organismHost>
<organismHost>
    <name type="scientific">Raphanus sativus</name>
    <name type="common">Radish</name>
    <name type="synonym">Raphanus raphanistrum var. sativus</name>
    <dbReference type="NCBI Taxonomy" id="3726"/>
</organismHost>
<organismHost>
    <name type="scientific">Solanum lycopersicum</name>
    <name type="common">Tomato</name>
    <name type="synonym">Lycopersicon esculentum</name>
    <dbReference type="NCBI Taxonomy" id="4081"/>
</organismHost>
<organismHost>
    <name type="scientific">Spinacia oleracea</name>
    <name type="common">Spinach</name>
    <dbReference type="NCBI Taxonomy" id="3562"/>
</organismHost>
<organismHost>
    <name type="scientific">Trifolium subterraneum</name>
    <name type="common">Subterranean clover</name>
    <dbReference type="NCBI Taxonomy" id="3900"/>
</organismHost>
<organismHost>
    <name type="scientific">Vicia faba</name>
    <name type="common">Broad bean</name>
    <name type="synonym">Faba vulgaris</name>
    <dbReference type="NCBI Taxonomy" id="3906"/>
</organismHost>
<accession>P09507</accession>
<comment type="function">
    <text evidence="6">Precursor from which the RNA-dependent RNA polymerase (RdRp) is probably released. RNA-dependent RNA polymerase plays an essential role in virus replication (Potential).</text>
</comment>
<comment type="catalytic activity">
    <reaction evidence="3">
        <text>RNA(n) + a ribonucleoside 5'-triphosphate = RNA(n+1) + diphosphate</text>
        <dbReference type="Rhea" id="RHEA:21248"/>
        <dbReference type="Rhea" id="RHEA-COMP:14527"/>
        <dbReference type="Rhea" id="RHEA-COMP:17342"/>
        <dbReference type="ChEBI" id="CHEBI:33019"/>
        <dbReference type="ChEBI" id="CHEBI:61557"/>
        <dbReference type="ChEBI" id="CHEBI:140395"/>
        <dbReference type="EC" id="2.7.7.48"/>
    </reaction>
</comment>
<comment type="subcellular location">
    <molecule>Protein P1-P2</molecule>
    <subcellularLocation>
        <location evidence="6">Membrane</location>
        <topology evidence="6">Multi-pass membrane protein</topology>
    </subcellularLocation>
</comment>
<comment type="alternative products">
    <event type="ribosomal frameshifting"/>
    <isoform>
        <id>P09507-1</id>
        <name>RNA-directed RNA polymerase</name>
        <sequence type="displayed"/>
    </isoform>
    <isoform>
        <id>P09506-1</id>
        <name>Protein P1</name>
        <sequence type="external"/>
    </isoform>
</comment>
<comment type="PTM">
    <text evidence="6">Specific enzymatic cleavages in vivo yield mature proteins. The protease probably cleaves itself and releases the RdRp (Potential). Cleavages have been shown in the P1 protein, but since the N-terminus containing the serine protease is shared between P1 and P1-P2, cleavages should also occur within the P1-P2 protein.</text>
</comment>
<comment type="miscellaneous">
    <molecule>Isoform RNA-directed RNA polymerase</molecule>
    <text>Produced by -1 ribosomal frameshifting between codons 461 and 462.</text>
</comment>
<keyword id="KW-0378">Hydrolase</keyword>
<keyword id="KW-0472">Membrane</keyword>
<keyword id="KW-0511">Multifunctional enzyme</keyword>
<keyword id="KW-0547">Nucleotide-binding</keyword>
<keyword id="KW-0548">Nucleotidyltransferase</keyword>
<keyword id="KW-0645">Protease</keyword>
<keyword id="KW-1185">Reference proteome</keyword>
<keyword id="KW-0688">Ribosomal frameshifting</keyword>
<keyword id="KW-0696">RNA-directed RNA polymerase</keyword>
<keyword id="KW-0720">Serine protease</keyword>
<keyword id="KW-0732">Signal</keyword>
<keyword id="KW-0808">Transferase</keyword>
<keyword id="KW-0812">Transmembrane</keyword>
<keyword id="KW-1133">Transmembrane helix</keyword>
<keyword id="KW-0693">Viral RNA replication</keyword>
<name>RDRP_TYYVF</name>
<proteinExistence type="inferred from homology"/>
<dbReference type="EC" id="3.4.21.-"/>
<dbReference type="EC" id="2.7.7.48"/>
<dbReference type="EMBL" id="X13063">
    <property type="protein sequence ID" value="CAA31464.2"/>
    <property type="molecule type" value="Genomic_RNA"/>
</dbReference>
<dbReference type="PIR" id="S01940">
    <property type="entry name" value="RRVQFL"/>
</dbReference>
<dbReference type="RefSeq" id="NP_620485.2">
    <property type="nucleotide sequence ID" value="NC_003743.1"/>
</dbReference>
<dbReference type="MEROPS" id="S39.002"/>
<dbReference type="KEGG" id="vg:940481"/>
<dbReference type="Proteomes" id="UP000007545">
    <property type="component" value="Segment"/>
</dbReference>
<dbReference type="GO" id="GO:0016020">
    <property type="term" value="C:membrane"/>
    <property type="evidence" value="ECO:0007669"/>
    <property type="project" value="UniProtKB-SubCell"/>
</dbReference>
<dbReference type="GO" id="GO:0000166">
    <property type="term" value="F:nucleotide binding"/>
    <property type="evidence" value="ECO:0007669"/>
    <property type="project" value="UniProtKB-KW"/>
</dbReference>
<dbReference type="GO" id="GO:0003723">
    <property type="term" value="F:RNA binding"/>
    <property type="evidence" value="ECO:0007669"/>
    <property type="project" value="InterPro"/>
</dbReference>
<dbReference type="GO" id="GO:0003968">
    <property type="term" value="F:RNA-directed RNA polymerase activity"/>
    <property type="evidence" value="ECO:0007669"/>
    <property type="project" value="UniProtKB-KW"/>
</dbReference>
<dbReference type="GO" id="GO:0004252">
    <property type="term" value="F:serine-type endopeptidase activity"/>
    <property type="evidence" value="ECO:0007669"/>
    <property type="project" value="InterPro"/>
</dbReference>
<dbReference type="GO" id="GO:0006351">
    <property type="term" value="P:DNA-templated transcription"/>
    <property type="evidence" value="ECO:0007669"/>
    <property type="project" value="InterPro"/>
</dbReference>
<dbReference type="GO" id="GO:0006508">
    <property type="term" value="P:proteolysis"/>
    <property type="evidence" value="ECO:0007669"/>
    <property type="project" value="UniProtKB-KW"/>
</dbReference>
<dbReference type="GO" id="GO:0039694">
    <property type="term" value="P:viral RNA genome replication"/>
    <property type="evidence" value="ECO:0007669"/>
    <property type="project" value="InterPro"/>
</dbReference>
<dbReference type="GO" id="GO:0075523">
    <property type="term" value="P:viral translational frameshifting"/>
    <property type="evidence" value="ECO:0007669"/>
    <property type="project" value="UniProtKB-KW"/>
</dbReference>
<dbReference type="CDD" id="cd23180">
    <property type="entry name" value="ps-ssRNAv_Solemoviridae_RdRp"/>
    <property type="match status" value="1"/>
</dbReference>
<dbReference type="Gene3D" id="2.40.10.10">
    <property type="entry name" value="Trypsin-like serine proteases"/>
    <property type="match status" value="2"/>
</dbReference>
<dbReference type="InterPro" id="IPR043502">
    <property type="entry name" value="DNA/RNA_pol_sf"/>
</dbReference>
<dbReference type="InterPro" id="IPR009003">
    <property type="entry name" value="Peptidase_S1_PA"/>
</dbReference>
<dbReference type="InterPro" id="IPR043504">
    <property type="entry name" value="Peptidase_S1_PA_chymotrypsin"/>
</dbReference>
<dbReference type="InterPro" id="IPR000382">
    <property type="entry name" value="Peptidase_S39B_luteovirus"/>
</dbReference>
<dbReference type="InterPro" id="IPR001795">
    <property type="entry name" value="RNA-dir_pol_luteovirus"/>
</dbReference>
<dbReference type="InterPro" id="IPR007094">
    <property type="entry name" value="RNA-dir_pol_PSvirus"/>
</dbReference>
<dbReference type="Pfam" id="PF02122">
    <property type="entry name" value="Peptidase_S39"/>
    <property type="match status" value="1"/>
</dbReference>
<dbReference type="Pfam" id="PF02123">
    <property type="entry name" value="RdRP_4"/>
    <property type="match status" value="1"/>
</dbReference>
<dbReference type="PRINTS" id="PR00914">
    <property type="entry name" value="LVIRUSRNAPOL"/>
</dbReference>
<dbReference type="SUPFAM" id="SSF56672">
    <property type="entry name" value="DNA/RNA polymerases"/>
    <property type="match status" value="1"/>
</dbReference>
<dbReference type="SUPFAM" id="SSF50494">
    <property type="entry name" value="Trypsin-like serine proteases"/>
    <property type="match status" value="1"/>
</dbReference>
<dbReference type="PROSITE" id="PS51868">
    <property type="entry name" value="PEPTIDASE_S39"/>
    <property type="match status" value="1"/>
</dbReference>
<dbReference type="PROSITE" id="PS50507">
    <property type="entry name" value="RDRP_SSRNA_POS"/>
    <property type="match status" value="1"/>
</dbReference>
<evidence type="ECO:0000250" key="1"/>
<evidence type="ECO:0000255" key="2"/>
<evidence type="ECO:0000255" key="3">
    <source>
        <dbReference type="PROSITE-ProRule" id="PRU00539"/>
    </source>
</evidence>
<evidence type="ECO:0000255" key="4">
    <source>
        <dbReference type="PROSITE-ProRule" id="PRU01216"/>
    </source>
</evidence>
<evidence type="ECO:0000256" key="5">
    <source>
        <dbReference type="SAM" id="MobiDB-lite"/>
    </source>
</evidence>
<evidence type="ECO:0000305" key="6"/>
<protein>
    <recommendedName>
        <fullName>Protein P1-P2</fullName>
    </recommendedName>
    <component>
        <recommendedName>
            <fullName>Serine protease</fullName>
            <ecNumber>3.4.21.-</ecNumber>
        </recommendedName>
    </component>
    <component>
        <recommendedName>
            <fullName>RNA-directed RNA polymerase</fullName>
            <ecNumber>2.7.7.48</ecNumber>
        </recommendedName>
    </component>
</protein>
<gene>
    <name type="ORF">ORF1/ORF2</name>
</gene>
<reference key="1">
    <citation type="journal article" date="1988" name="Nucleic Acids Res.">
        <title>Nucleotide sequence of beet western yellows virus RNA.</title>
        <authorList>
            <person name="Veidt I."/>
            <person name="Lot H."/>
            <person name="Leiser M."/>
            <person name="Scheidecker D."/>
            <person name="Guilley H."/>
            <person name="Richards K.E."/>
            <person name="Jonard G."/>
        </authorList>
    </citation>
    <scope>NUCLEOTIDE SEQUENCE [GENOMIC RNA]</scope>
</reference>
<reference key="2">
    <citation type="submission" date="2002-04" db="EMBL/GenBank/DDBJ databases">
        <authorList>
            <person name="Veidt I."/>
            <person name="Lot H."/>
            <person name="Leiser M."/>
            <person name="Scheidecker D."/>
            <person name="Guilley H."/>
            <person name="Richards K.E."/>
            <person name="Jonard G."/>
        </authorList>
    </citation>
    <scope>SEQUENCE REVISION</scope>
</reference>